<reference key="1">
    <citation type="journal article" date="2009" name="J. Bacteriol.">
        <title>The genome of Thermosipho africanus TCF52B: lateral genetic connections to the Firmicutes and Archaea.</title>
        <authorList>
            <person name="Nesboe C.L."/>
            <person name="Bapteste E."/>
            <person name="Curtis B."/>
            <person name="Dahle H."/>
            <person name="Lopez P."/>
            <person name="Macleod D."/>
            <person name="Dlutek M."/>
            <person name="Bowman S."/>
            <person name="Zhaxybayeva O."/>
            <person name="Birkeland N.-K."/>
            <person name="Doolittle W.F."/>
        </authorList>
    </citation>
    <scope>NUCLEOTIDE SEQUENCE [LARGE SCALE GENOMIC DNA]</scope>
    <source>
        <strain>TCF52B</strain>
    </source>
</reference>
<dbReference type="EMBL" id="CP001185">
    <property type="protein sequence ID" value="ACJ75691.1"/>
    <property type="molecule type" value="Genomic_DNA"/>
</dbReference>
<dbReference type="RefSeq" id="WP_012580086.1">
    <property type="nucleotide sequence ID" value="NC_011653.1"/>
</dbReference>
<dbReference type="SMR" id="B7IHX7"/>
<dbReference type="STRING" id="484019.THA_1246"/>
<dbReference type="KEGG" id="taf:THA_1246"/>
<dbReference type="eggNOG" id="COG0217">
    <property type="taxonomic scope" value="Bacteria"/>
</dbReference>
<dbReference type="HOGENOM" id="CLU_062974_2_2_0"/>
<dbReference type="OrthoDB" id="9781053at2"/>
<dbReference type="Proteomes" id="UP000002453">
    <property type="component" value="Chromosome"/>
</dbReference>
<dbReference type="GO" id="GO:0005829">
    <property type="term" value="C:cytosol"/>
    <property type="evidence" value="ECO:0007669"/>
    <property type="project" value="TreeGrafter"/>
</dbReference>
<dbReference type="GO" id="GO:0003677">
    <property type="term" value="F:DNA binding"/>
    <property type="evidence" value="ECO:0007669"/>
    <property type="project" value="UniProtKB-UniRule"/>
</dbReference>
<dbReference type="GO" id="GO:0006355">
    <property type="term" value="P:regulation of DNA-templated transcription"/>
    <property type="evidence" value="ECO:0007669"/>
    <property type="project" value="UniProtKB-UniRule"/>
</dbReference>
<dbReference type="FunFam" id="1.10.10.200:FF:000001">
    <property type="entry name" value="Probable transcriptional regulatory protein YebC"/>
    <property type="match status" value="1"/>
</dbReference>
<dbReference type="Gene3D" id="1.10.10.200">
    <property type="match status" value="1"/>
</dbReference>
<dbReference type="Gene3D" id="3.30.70.980">
    <property type="match status" value="2"/>
</dbReference>
<dbReference type="HAMAP" id="MF_00693">
    <property type="entry name" value="Transcrip_reg_TACO1"/>
    <property type="match status" value="1"/>
</dbReference>
<dbReference type="InterPro" id="IPR017856">
    <property type="entry name" value="Integrase-like_N"/>
</dbReference>
<dbReference type="InterPro" id="IPR048300">
    <property type="entry name" value="TACO1_YebC-like_2nd/3rd_dom"/>
</dbReference>
<dbReference type="InterPro" id="IPR049083">
    <property type="entry name" value="TACO1_YebC_N"/>
</dbReference>
<dbReference type="InterPro" id="IPR002876">
    <property type="entry name" value="Transcrip_reg_TACO1-like"/>
</dbReference>
<dbReference type="InterPro" id="IPR026564">
    <property type="entry name" value="Transcrip_reg_TACO1-like_dom3"/>
</dbReference>
<dbReference type="InterPro" id="IPR029072">
    <property type="entry name" value="YebC-like"/>
</dbReference>
<dbReference type="NCBIfam" id="NF001030">
    <property type="entry name" value="PRK00110.1"/>
    <property type="match status" value="1"/>
</dbReference>
<dbReference type="NCBIfam" id="NF009044">
    <property type="entry name" value="PRK12378.1"/>
    <property type="match status" value="1"/>
</dbReference>
<dbReference type="NCBIfam" id="TIGR01033">
    <property type="entry name" value="YebC/PmpR family DNA-binding transcriptional regulator"/>
    <property type="match status" value="1"/>
</dbReference>
<dbReference type="PANTHER" id="PTHR12532:SF6">
    <property type="entry name" value="TRANSCRIPTIONAL REGULATORY PROTEIN YEBC-RELATED"/>
    <property type="match status" value="1"/>
</dbReference>
<dbReference type="PANTHER" id="PTHR12532">
    <property type="entry name" value="TRANSLATIONAL ACTIVATOR OF CYTOCHROME C OXIDASE 1"/>
    <property type="match status" value="1"/>
</dbReference>
<dbReference type="Pfam" id="PF20772">
    <property type="entry name" value="TACO1_YebC_N"/>
    <property type="match status" value="1"/>
</dbReference>
<dbReference type="Pfam" id="PF01709">
    <property type="entry name" value="Transcrip_reg"/>
    <property type="match status" value="1"/>
</dbReference>
<dbReference type="SUPFAM" id="SSF75625">
    <property type="entry name" value="YebC-like"/>
    <property type="match status" value="1"/>
</dbReference>
<gene>
    <name type="ordered locus">THA_1246</name>
</gene>
<accession>B7IHX7</accession>
<protein>
    <recommendedName>
        <fullName evidence="1">Probable transcriptional regulatory protein THA_1246</fullName>
    </recommendedName>
</protein>
<keyword id="KW-0963">Cytoplasm</keyword>
<keyword id="KW-0238">DNA-binding</keyword>
<keyword id="KW-1185">Reference proteome</keyword>
<keyword id="KW-0804">Transcription</keyword>
<keyword id="KW-0805">Transcription regulation</keyword>
<organism>
    <name type="scientific">Thermosipho africanus (strain TCF52B)</name>
    <dbReference type="NCBI Taxonomy" id="484019"/>
    <lineage>
        <taxon>Bacteria</taxon>
        <taxon>Thermotogati</taxon>
        <taxon>Thermotogota</taxon>
        <taxon>Thermotogae</taxon>
        <taxon>Thermotogales</taxon>
        <taxon>Fervidobacteriaceae</taxon>
        <taxon>Thermosipho</taxon>
    </lineage>
</organism>
<proteinExistence type="inferred from homology"/>
<comment type="subcellular location">
    <subcellularLocation>
        <location evidence="1">Cytoplasm</location>
    </subcellularLocation>
</comment>
<comment type="similarity">
    <text evidence="1">Belongs to the TACO1 family.</text>
</comment>
<name>Y1246_THEAB</name>
<feature type="chain" id="PRO_1000132246" description="Probable transcriptional regulatory protein THA_1246">
    <location>
        <begin position="1"/>
        <end position="252"/>
    </location>
</feature>
<evidence type="ECO:0000255" key="1">
    <source>
        <dbReference type="HAMAP-Rule" id="MF_00693"/>
    </source>
</evidence>
<sequence length="252" mass="27904">MSGHNKWANIKHRKAAQDAKKSKIFTKLIREIIVAAKEGGGDPETNPRLRAVLERARAANMPKDTIEKSIKKGTGELEGVDYQEIIYEAYAPAGVALYIYAMTDNKNRTAQELRHLLSKHGGSLAESGSVAWLFERKGIIEIPKEKIADFEEFAMVAIDAGAEDIIEDDPIQVITAPDMLTEVKDKLAENGFEGEAKVTFIPKNTVKVTGADAEKVLKLVSVLEDNDDVQEVYANFEIDDKELEEIMSKLEG</sequence>